<feature type="chain" id="PRO_0000316095" description="GMP synthase [glutamine-hydrolyzing] subunit A">
    <location>
        <begin position="1"/>
        <end position="189"/>
    </location>
</feature>
<feature type="domain" description="Glutamine amidotransferase type-1" evidence="1">
    <location>
        <begin position="1"/>
        <end position="189"/>
    </location>
</feature>
<feature type="active site" description="Nucleophile" evidence="1">
    <location>
        <position position="76"/>
    </location>
</feature>
<feature type="active site" evidence="1">
    <location>
        <position position="163"/>
    </location>
</feature>
<feature type="active site" evidence="1">
    <location>
        <position position="165"/>
    </location>
</feature>
<organism>
    <name type="scientific">Methanococcus maripaludis (strain C7 / ATCC BAA-1331)</name>
    <dbReference type="NCBI Taxonomy" id="426368"/>
    <lineage>
        <taxon>Archaea</taxon>
        <taxon>Methanobacteriati</taxon>
        <taxon>Methanobacteriota</taxon>
        <taxon>Methanomada group</taxon>
        <taxon>Methanococci</taxon>
        <taxon>Methanococcales</taxon>
        <taxon>Methanococcaceae</taxon>
        <taxon>Methanococcus</taxon>
    </lineage>
</organism>
<gene>
    <name evidence="1" type="primary">guaAA</name>
    <name type="ordered locus">MmarC7_0690</name>
</gene>
<name>GUAAA_METM7</name>
<accession>A6VH31</accession>
<proteinExistence type="inferred from homology"/>
<keyword id="KW-0067">ATP-binding</keyword>
<keyword id="KW-0315">Glutamine amidotransferase</keyword>
<keyword id="KW-0332">GMP biosynthesis</keyword>
<keyword id="KW-0436">Ligase</keyword>
<keyword id="KW-0547">Nucleotide-binding</keyword>
<keyword id="KW-0658">Purine biosynthesis</keyword>
<evidence type="ECO:0000255" key="1">
    <source>
        <dbReference type="HAMAP-Rule" id="MF_01510"/>
    </source>
</evidence>
<reference key="1">
    <citation type="submission" date="2007-06" db="EMBL/GenBank/DDBJ databases">
        <title>Complete sequence of Methanococcus maripaludis C7.</title>
        <authorList>
            <consortium name="US DOE Joint Genome Institute"/>
            <person name="Copeland A."/>
            <person name="Lucas S."/>
            <person name="Lapidus A."/>
            <person name="Barry K."/>
            <person name="Glavina del Rio T."/>
            <person name="Dalin E."/>
            <person name="Tice H."/>
            <person name="Pitluck S."/>
            <person name="Clum A."/>
            <person name="Schmutz J."/>
            <person name="Larimer F."/>
            <person name="Land M."/>
            <person name="Hauser L."/>
            <person name="Kyrpides N."/>
            <person name="Anderson I."/>
            <person name="Sieprawska-Lupa M."/>
            <person name="Whitman W.B."/>
            <person name="Richardson P."/>
        </authorList>
    </citation>
    <scope>NUCLEOTIDE SEQUENCE [LARGE SCALE GENOMIC DNA]</scope>
    <source>
        <strain>C7 / ATCC BAA-1331</strain>
    </source>
</reference>
<sequence length="189" mass="20993">MIVILNNGGQYVHRIQRSLKYLGVPAKIVPNSTTLEEITVNPEIKGIILSGGPDITKATNCENIALNSEIPVLGICLGHQLISKAYGGHVSRADSEEYASIKIYVKEENDLFKGVPSEFTAWASHMDEVKVTPECFEILAYSDICGVESIKHKEKSLYGVQFHPEVSHTEYGDVLLKNFCKKCGFEFEE</sequence>
<protein>
    <recommendedName>
        <fullName evidence="1">GMP synthase [glutamine-hydrolyzing] subunit A</fullName>
        <ecNumber evidence="1">6.3.5.2</ecNumber>
    </recommendedName>
    <alternativeName>
        <fullName evidence="1">Glutamine amidotransferase</fullName>
    </alternativeName>
</protein>
<comment type="function">
    <text evidence="1">Catalyzes the synthesis of GMP from XMP.</text>
</comment>
<comment type="catalytic activity">
    <reaction evidence="1">
        <text>XMP + L-glutamine + ATP + H2O = GMP + L-glutamate + AMP + diphosphate + 2 H(+)</text>
        <dbReference type="Rhea" id="RHEA:11680"/>
        <dbReference type="ChEBI" id="CHEBI:15377"/>
        <dbReference type="ChEBI" id="CHEBI:15378"/>
        <dbReference type="ChEBI" id="CHEBI:29985"/>
        <dbReference type="ChEBI" id="CHEBI:30616"/>
        <dbReference type="ChEBI" id="CHEBI:33019"/>
        <dbReference type="ChEBI" id="CHEBI:57464"/>
        <dbReference type="ChEBI" id="CHEBI:58115"/>
        <dbReference type="ChEBI" id="CHEBI:58359"/>
        <dbReference type="ChEBI" id="CHEBI:456215"/>
        <dbReference type="EC" id="6.3.5.2"/>
    </reaction>
</comment>
<comment type="pathway">
    <text evidence="1">Purine metabolism; GMP biosynthesis; GMP from XMP (L-Gln route): step 1/1.</text>
</comment>
<comment type="subunit">
    <text evidence="1">Heterodimer composed of a glutamine amidotransferase subunit (A) and a GMP-binding subunit (B).</text>
</comment>
<dbReference type="EC" id="6.3.5.2" evidence="1"/>
<dbReference type="EMBL" id="CP000745">
    <property type="protein sequence ID" value="ABR65757.1"/>
    <property type="molecule type" value="Genomic_DNA"/>
</dbReference>
<dbReference type="SMR" id="A6VH31"/>
<dbReference type="STRING" id="426368.MmarC7_0690"/>
<dbReference type="KEGG" id="mmz:MmarC7_0690"/>
<dbReference type="eggNOG" id="arCOG00087">
    <property type="taxonomic scope" value="Archaea"/>
</dbReference>
<dbReference type="HOGENOM" id="CLU_014340_1_4_2"/>
<dbReference type="OrthoDB" id="10772at2157"/>
<dbReference type="UniPathway" id="UPA00189">
    <property type="reaction ID" value="UER00296"/>
</dbReference>
<dbReference type="GO" id="GO:0005829">
    <property type="term" value="C:cytosol"/>
    <property type="evidence" value="ECO:0007669"/>
    <property type="project" value="TreeGrafter"/>
</dbReference>
<dbReference type="GO" id="GO:0005524">
    <property type="term" value="F:ATP binding"/>
    <property type="evidence" value="ECO:0007669"/>
    <property type="project" value="UniProtKB-KW"/>
</dbReference>
<dbReference type="GO" id="GO:0003921">
    <property type="term" value="F:GMP synthase activity"/>
    <property type="evidence" value="ECO:0007669"/>
    <property type="project" value="TreeGrafter"/>
</dbReference>
<dbReference type="CDD" id="cd01742">
    <property type="entry name" value="GATase1_GMP_Synthase"/>
    <property type="match status" value="1"/>
</dbReference>
<dbReference type="FunFam" id="3.40.50.880:FF:000047">
    <property type="entry name" value="GMP synthase [glutamine-hydrolyzing] subunit A"/>
    <property type="match status" value="1"/>
</dbReference>
<dbReference type="Gene3D" id="3.40.50.880">
    <property type="match status" value="1"/>
</dbReference>
<dbReference type="HAMAP" id="MF_01510">
    <property type="entry name" value="GMP_synthase_A"/>
    <property type="match status" value="1"/>
</dbReference>
<dbReference type="InterPro" id="IPR029062">
    <property type="entry name" value="Class_I_gatase-like"/>
</dbReference>
<dbReference type="InterPro" id="IPR017926">
    <property type="entry name" value="GATASE"/>
</dbReference>
<dbReference type="InterPro" id="IPR004739">
    <property type="entry name" value="GMP_synth_GATase"/>
</dbReference>
<dbReference type="InterPro" id="IPR023686">
    <property type="entry name" value="GMP_synthase_A"/>
</dbReference>
<dbReference type="NCBIfam" id="TIGR00888">
    <property type="entry name" value="guaA_Nterm"/>
    <property type="match status" value="1"/>
</dbReference>
<dbReference type="NCBIfam" id="NF001975">
    <property type="entry name" value="PRK00758.1"/>
    <property type="match status" value="1"/>
</dbReference>
<dbReference type="PANTHER" id="PTHR11922:SF2">
    <property type="entry name" value="GMP SYNTHASE [GLUTAMINE-HYDROLYZING]"/>
    <property type="match status" value="1"/>
</dbReference>
<dbReference type="PANTHER" id="PTHR11922">
    <property type="entry name" value="GMP SYNTHASE-RELATED"/>
    <property type="match status" value="1"/>
</dbReference>
<dbReference type="Pfam" id="PF00117">
    <property type="entry name" value="GATase"/>
    <property type="match status" value="1"/>
</dbReference>
<dbReference type="PRINTS" id="PR00097">
    <property type="entry name" value="ANTSNTHASEII"/>
</dbReference>
<dbReference type="PRINTS" id="PR00096">
    <property type="entry name" value="GATASE"/>
</dbReference>
<dbReference type="SUPFAM" id="SSF52317">
    <property type="entry name" value="Class I glutamine amidotransferase-like"/>
    <property type="match status" value="1"/>
</dbReference>
<dbReference type="PROSITE" id="PS51273">
    <property type="entry name" value="GATASE_TYPE_1"/>
    <property type="match status" value="1"/>
</dbReference>